<keyword id="KW-0963">Cytoplasm</keyword>
<keyword id="KW-0903">Direct protein sequencing</keyword>
<keyword id="KW-0349">Heme</keyword>
<keyword id="KW-0408">Iron</keyword>
<keyword id="KW-0479">Metal-binding</keyword>
<keyword id="KW-0514">Muscle protein</keyword>
<keyword id="KW-0560">Oxidoreductase</keyword>
<keyword id="KW-0561">Oxygen transport</keyword>
<keyword id="KW-0597">Phosphoprotein</keyword>
<keyword id="KW-1185">Reference proteome</keyword>
<keyword id="KW-0813">Transport</keyword>
<proteinExistence type="evidence at protein level"/>
<evidence type="ECO:0000250" key="1">
    <source>
        <dbReference type="UniProtKB" id="P02144"/>
    </source>
</evidence>
<evidence type="ECO:0000250" key="2">
    <source>
        <dbReference type="UniProtKB" id="P02185"/>
    </source>
</evidence>
<evidence type="ECO:0000250" key="3">
    <source>
        <dbReference type="UniProtKB" id="P02189"/>
    </source>
</evidence>
<evidence type="ECO:0000250" key="4">
    <source>
        <dbReference type="UniProtKB" id="P04247"/>
    </source>
</evidence>
<evidence type="ECO:0000250" key="5">
    <source>
        <dbReference type="UniProtKB" id="P68082"/>
    </source>
</evidence>
<evidence type="ECO:0000250" key="6">
    <source>
        <dbReference type="UniProtKB" id="Q9QZ76"/>
    </source>
</evidence>
<evidence type="ECO:0000255" key="7">
    <source>
        <dbReference type="PROSITE-ProRule" id="PRU00238"/>
    </source>
</evidence>
<evidence type="ECO:0000269" key="8">
    <source>
    </source>
</evidence>
<sequence>MGLSDGEWQLVLNVWGKVEADIPSHGQEVLIRLFKGHPETLEKFDKFKHLKSEDEMKASEDLKKHGVTVLTALGGILKKKGHHEAEIKPLAQSHATKHKIPVKYLELISESIIQVLQSKHPGDFGADAQGAMNKALELFRNDMAAKYKELGFQG</sequence>
<dbReference type="EC" id="1.7.-.-" evidence="1"/>
<dbReference type="EC" id="1.11.1.-" evidence="1"/>
<dbReference type="PIR" id="A02470">
    <property type="entry name" value="MYMQIM"/>
</dbReference>
<dbReference type="RefSeq" id="XP_005567517.1">
    <property type="nucleotide sequence ID" value="XM_005567460.4"/>
</dbReference>
<dbReference type="RefSeq" id="XP_005567518.1">
    <property type="nucleotide sequence ID" value="XM_005567461.2"/>
</dbReference>
<dbReference type="RefSeq" id="XP_015312747.1">
    <property type="nucleotide sequence ID" value="XM_015457261.3"/>
</dbReference>
<dbReference type="SMR" id="P02150"/>
<dbReference type="STRING" id="9541.ENSMFAP00000030244"/>
<dbReference type="Ensembl" id="ENSMFAT00000004449.2">
    <property type="protein sequence ID" value="ENSMFAP00000030244.1"/>
    <property type="gene ID" value="ENSMFAG00000042315.2"/>
</dbReference>
<dbReference type="GeneID" id="102132612"/>
<dbReference type="KEGG" id="mcf:102132612"/>
<dbReference type="CTD" id="4151"/>
<dbReference type="VEuPathDB" id="HostDB:ENSMFAG00000042315"/>
<dbReference type="eggNOG" id="KOG3378">
    <property type="taxonomic scope" value="Eukaryota"/>
</dbReference>
<dbReference type="GeneTree" id="ENSGT00940000160809"/>
<dbReference type="OMA" id="VIIRMFQ"/>
<dbReference type="OrthoDB" id="2349at314294"/>
<dbReference type="Proteomes" id="UP000233100">
    <property type="component" value="Chromosome 10"/>
</dbReference>
<dbReference type="Bgee" id="ENSMFAG00000042315">
    <property type="expression patterns" value="Expressed in heart and 4 other cell types or tissues"/>
</dbReference>
<dbReference type="GO" id="GO:0070062">
    <property type="term" value="C:extracellular exosome"/>
    <property type="evidence" value="ECO:0007669"/>
    <property type="project" value="TreeGrafter"/>
</dbReference>
<dbReference type="GO" id="GO:0016528">
    <property type="term" value="C:sarcoplasm"/>
    <property type="evidence" value="ECO:0000250"/>
    <property type="project" value="UniProtKB"/>
</dbReference>
<dbReference type="GO" id="GO:0020037">
    <property type="term" value="F:heme binding"/>
    <property type="evidence" value="ECO:0007669"/>
    <property type="project" value="InterPro"/>
</dbReference>
<dbReference type="GO" id="GO:0046872">
    <property type="term" value="F:metal ion binding"/>
    <property type="evidence" value="ECO:0007669"/>
    <property type="project" value="UniProtKB-KW"/>
</dbReference>
<dbReference type="GO" id="GO:0098809">
    <property type="term" value="F:nitrite reductase activity"/>
    <property type="evidence" value="ECO:0000250"/>
    <property type="project" value="UniProtKB"/>
</dbReference>
<dbReference type="GO" id="GO:0019825">
    <property type="term" value="F:oxygen binding"/>
    <property type="evidence" value="ECO:0007669"/>
    <property type="project" value="InterPro"/>
</dbReference>
<dbReference type="GO" id="GO:0005344">
    <property type="term" value="F:oxygen carrier activity"/>
    <property type="evidence" value="ECO:0000250"/>
    <property type="project" value="UniProtKB"/>
</dbReference>
<dbReference type="GO" id="GO:0004601">
    <property type="term" value="F:peroxidase activity"/>
    <property type="evidence" value="ECO:0000250"/>
    <property type="project" value="UniProtKB"/>
</dbReference>
<dbReference type="GO" id="GO:0019430">
    <property type="term" value="P:removal of superoxide radicals"/>
    <property type="evidence" value="ECO:0000250"/>
    <property type="project" value="UniProtKB"/>
</dbReference>
<dbReference type="CDD" id="cd08926">
    <property type="entry name" value="Mb"/>
    <property type="match status" value="1"/>
</dbReference>
<dbReference type="Gene3D" id="6.10.140.2100">
    <property type="match status" value="1"/>
</dbReference>
<dbReference type="Gene3D" id="6.10.140.2110">
    <property type="match status" value="1"/>
</dbReference>
<dbReference type="InterPro" id="IPR000971">
    <property type="entry name" value="Globin"/>
</dbReference>
<dbReference type="InterPro" id="IPR009050">
    <property type="entry name" value="Globin-like_sf"/>
</dbReference>
<dbReference type="InterPro" id="IPR002335">
    <property type="entry name" value="Myoglobin"/>
</dbReference>
<dbReference type="PANTHER" id="PTHR47132">
    <property type="entry name" value="MYOGLOBIN"/>
    <property type="match status" value="1"/>
</dbReference>
<dbReference type="PANTHER" id="PTHR47132:SF1">
    <property type="entry name" value="MYOGLOBIN"/>
    <property type="match status" value="1"/>
</dbReference>
<dbReference type="Pfam" id="PF00042">
    <property type="entry name" value="Globin"/>
    <property type="match status" value="1"/>
</dbReference>
<dbReference type="PRINTS" id="PR00613">
    <property type="entry name" value="MYOGLOBIN"/>
</dbReference>
<dbReference type="SUPFAM" id="SSF46458">
    <property type="entry name" value="Globin-like"/>
    <property type="match status" value="1"/>
</dbReference>
<dbReference type="PROSITE" id="PS01033">
    <property type="entry name" value="GLOBIN"/>
    <property type="match status" value="1"/>
</dbReference>
<feature type="initiator methionine" description="Removed" evidence="8">
    <location>
        <position position="1"/>
    </location>
</feature>
<feature type="chain" id="PRO_0000053314" description="Myoglobin">
    <location>
        <begin position="2"/>
        <end position="154"/>
    </location>
</feature>
<feature type="domain" description="Globin" evidence="7">
    <location>
        <begin position="2"/>
        <end position="148"/>
    </location>
</feature>
<feature type="binding site" evidence="5">
    <location>
        <position position="65"/>
    </location>
    <ligand>
        <name>nitrite</name>
        <dbReference type="ChEBI" id="CHEBI:16301"/>
    </ligand>
</feature>
<feature type="binding site" evidence="3 7">
    <location>
        <position position="65"/>
    </location>
    <ligand>
        <name>O2</name>
        <dbReference type="ChEBI" id="CHEBI:15379"/>
    </ligand>
</feature>
<feature type="binding site" description="proximal binding residue" evidence="1">
    <location>
        <position position="94"/>
    </location>
    <ligand>
        <name>heme b</name>
        <dbReference type="ChEBI" id="CHEBI:60344"/>
    </ligand>
    <ligandPart>
        <name>Fe</name>
        <dbReference type="ChEBI" id="CHEBI:18248"/>
    </ligandPart>
</feature>
<feature type="modified residue" description="Phosphoserine" evidence="6">
    <location>
        <position position="4"/>
    </location>
</feature>
<feature type="modified residue" description="Phosphothreonine" evidence="4">
    <location>
        <position position="68"/>
    </location>
</feature>
<reference key="1">
    <citation type="journal article" date="1972" name="Biochim. Biophys. Acta">
        <title>The myoglobin of primates. 3. Cercopithecidae (Old World monkeys): Papio anubis (olive baboon) and Macaca fascicularis (=irus, crab-eating monkey).</title>
        <authorList>
            <person name="Romero-Herrera A.E."/>
            <person name="Lehmann H."/>
        </authorList>
    </citation>
    <scope>PROTEIN SEQUENCE OF 2-154</scope>
    <source>
        <tissue>Skeletal muscle</tissue>
    </source>
</reference>
<organism>
    <name type="scientific">Macaca fascicularis</name>
    <name type="common">Crab-eating macaque</name>
    <name type="synonym">Cynomolgus monkey</name>
    <dbReference type="NCBI Taxonomy" id="9541"/>
    <lineage>
        <taxon>Eukaryota</taxon>
        <taxon>Metazoa</taxon>
        <taxon>Chordata</taxon>
        <taxon>Craniata</taxon>
        <taxon>Vertebrata</taxon>
        <taxon>Euteleostomi</taxon>
        <taxon>Mammalia</taxon>
        <taxon>Eutheria</taxon>
        <taxon>Euarchontoglires</taxon>
        <taxon>Primates</taxon>
        <taxon>Haplorrhini</taxon>
        <taxon>Catarrhini</taxon>
        <taxon>Cercopithecidae</taxon>
        <taxon>Cercopithecinae</taxon>
        <taxon>Macaca</taxon>
    </lineage>
</organism>
<gene>
    <name type="primary">MB</name>
</gene>
<protein>
    <recommendedName>
        <fullName>Myoglobin</fullName>
    </recommendedName>
    <alternativeName>
        <fullName evidence="1">Nitrite reductase MB</fullName>
        <ecNumber evidence="1">1.7.-.-</ecNumber>
    </alternativeName>
    <alternativeName>
        <fullName evidence="1">Pseudoperoxidase MB</fullName>
        <ecNumber evidence="1">1.11.1.-</ecNumber>
    </alternativeName>
</protein>
<name>MYG_MACFA</name>
<accession>P02150</accession>
<comment type="function">
    <text evidence="1">Monomeric heme protein which primary function is to store oxygen and facilitate its diffusion within muscle tissues. Reversibly binds oxygen through a pentacoordinated heme iron and enables its timely and efficient release as needed during periods of heightened demand. Depending on the oxidative conditions of tissues and cells, and in addition to its ability to bind oxygen, it also has a nitrite reductase activity whereby it regulates the production of bioactive nitric oxide. Under stress conditions, like hypoxia and anoxia, it also protects cells against reactive oxygen species thanks to its pseudoperoxidase activity.</text>
</comment>
<comment type="catalytic activity">
    <reaction evidence="1">
        <text>Fe(III)-heme b-[protein] + nitric oxide + H2O = Fe(II)-heme b-[protein] + nitrite + 2 H(+)</text>
        <dbReference type="Rhea" id="RHEA:77711"/>
        <dbReference type="Rhea" id="RHEA-COMP:18975"/>
        <dbReference type="Rhea" id="RHEA-COMP:18976"/>
        <dbReference type="ChEBI" id="CHEBI:15377"/>
        <dbReference type="ChEBI" id="CHEBI:15378"/>
        <dbReference type="ChEBI" id="CHEBI:16301"/>
        <dbReference type="ChEBI" id="CHEBI:16480"/>
        <dbReference type="ChEBI" id="CHEBI:55376"/>
        <dbReference type="ChEBI" id="CHEBI:60344"/>
    </reaction>
    <physiologicalReaction direction="right-to-left" evidence="1">
        <dbReference type="Rhea" id="RHEA:77713"/>
    </physiologicalReaction>
</comment>
<comment type="catalytic activity">
    <reaction evidence="1">
        <text>H2O2 + AH2 = A + 2 H2O</text>
        <dbReference type="Rhea" id="RHEA:30275"/>
        <dbReference type="ChEBI" id="CHEBI:13193"/>
        <dbReference type="ChEBI" id="CHEBI:15377"/>
        <dbReference type="ChEBI" id="CHEBI:16240"/>
        <dbReference type="ChEBI" id="CHEBI:17499"/>
    </reaction>
</comment>
<comment type="subunit">
    <text evidence="2">Monomeric.</text>
</comment>
<comment type="subcellular location">
    <subcellularLocation>
        <location evidence="1">Cytoplasm</location>
        <location evidence="1">Sarcoplasm</location>
    </subcellularLocation>
</comment>
<comment type="similarity">
    <text evidence="7">Belongs to the globin family.</text>
</comment>